<protein>
    <recommendedName>
        <fullName evidence="1">Queuine tRNA-ribosyltransferase</fullName>
        <ecNumber evidence="1">2.4.2.29</ecNumber>
    </recommendedName>
    <alternativeName>
        <fullName evidence="1">Guanine insertion enzyme</fullName>
    </alternativeName>
    <alternativeName>
        <fullName evidence="1">tRNA-guanine transglycosylase</fullName>
    </alternativeName>
</protein>
<reference key="1">
    <citation type="journal article" date="2008" name="Foodborne Pathog. Dis.">
        <title>The complete genome sequence and analysis of the human pathogen Campylobacter lari.</title>
        <authorList>
            <person name="Miller W.G."/>
            <person name="Wang G."/>
            <person name="Binnewies T.T."/>
            <person name="Parker C.T."/>
        </authorList>
    </citation>
    <scope>NUCLEOTIDE SEQUENCE [LARGE SCALE GENOMIC DNA]</scope>
    <source>
        <strain>RM2100 / D67 / ATCC BAA-1060</strain>
    </source>
</reference>
<evidence type="ECO:0000255" key="1">
    <source>
        <dbReference type="HAMAP-Rule" id="MF_00168"/>
    </source>
</evidence>
<dbReference type="EC" id="2.4.2.29" evidence="1"/>
<dbReference type="EMBL" id="CP000932">
    <property type="protein sequence ID" value="ACM63918.1"/>
    <property type="molecule type" value="Genomic_DNA"/>
</dbReference>
<dbReference type="RefSeq" id="WP_012661301.1">
    <property type="nucleotide sequence ID" value="NC_012039.1"/>
</dbReference>
<dbReference type="SMR" id="B9KFT3"/>
<dbReference type="STRING" id="306263.Cla_0584"/>
<dbReference type="KEGG" id="cla:CLA_0584"/>
<dbReference type="PATRIC" id="fig|306263.5.peg.568"/>
<dbReference type="eggNOG" id="COG0343">
    <property type="taxonomic scope" value="Bacteria"/>
</dbReference>
<dbReference type="HOGENOM" id="CLU_022060_0_1_7"/>
<dbReference type="UniPathway" id="UPA00392"/>
<dbReference type="Proteomes" id="UP000007727">
    <property type="component" value="Chromosome"/>
</dbReference>
<dbReference type="GO" id="GO:0005829">
    <property type="term" value="C:cytosol"/>
    <property type="evidence" value="ECO:0007669"/>
    <property type="project" value="TreeGrafter"/>
</dbReference>
<dbReference type="GO" id="GO:0046872">
    <property type="term" value="F:metal ion binding"/>
    <property type="evidence" value="ECO:0007669"/>
    <property type="project" value="UniProtKB-KW"/>
</dbReference>
<dbReference type="GO" id="GO:0008479">
    <property type="term" value="F:tRNA-guanosine(34) queuine transglycosylase activity"/>
    <property type="evidence" value="ECO:0007669"/>
    <property type="project" value="UniProtKB-UniRule"/>
</dbReference>
<dbReference type="GO" id="GO:0008616">
    <property type="term" value="P:queuosine biosynthetic process"/>
    <property type="evidence" value="ECO:0007669"/>
    <property type="project" value="UniProtKB-UniRule"/>
</dbReference>
<dbReference type="GO" id="GO:0002099">
    <property type="term" value="P:tRNA wobble guanine modification"/>
    <property type="evidence" value="ECO:0007669"/>
    <property type="project" value="TreeGrafter"/>
</dbReference>
<dbReference type="GO" id="GO:0101030">
    <property type="term" value="P:tRNA-guanine transglycosylation"/>
    <property type="evidence" value="ECO:0007669"/>
    <property type="project" value="InterPro"/>
</dbReference>
<dbReference type="Gene3D" id="3.20.20.105">
    <property type="entry name" value="Queuine tRNA-ribosyltransferase-like"/>
    <property type="match status" value="1"/>
</dbReference>
<dbReference type="HAMAP" id="MF_00168">
    <property type="entry name" value="Q_tRNA_Tgt"/>
    <property type="match status" value="1"/>
</dbReference>
<dbReference type="InterPro" id="IPR050076">
    <property type="entry name" value="ArchSynthase1/Queuine_TRR"/>
</dbReference>
<dbReference type="InterPro" id="IPR004803">
    <property type="entry name" value="TGT"/>
</dbReference>
<dbReference type="InterPro" id="IPR036511">
    <property type="entry name" value="TGT-like_sf"/>
</dbReference>
<dbReference type="InterPro" id="IPR002616">
    <property type="entry name" value="tRNA_ribo_trans-like"/>
</dbReference>
<dbReference type="NCBIfam" id="TIGR00430">
    <property type="entry name" value="Q_tRNA_tgt"/>
    <property type="match status" value="1"/>
</dbReference>
<dbReference type="NCBIfam" id="TIGR00449">
    <property type="entry name" value="tgt_general"/>
    <property type="match status" value="1"/>
</dbReference>
<dbReference type="PANTHER" id="PTHR46499">
    <property type="entry name" value="QUEUINE TRNA-RIBOSYLTRANSFERASE"/>
    <property type="match status" value="1"/>
</dbReference>
<dbReference type="PANTHER" id="PTHR46499:SF1">
    <property type="entry name" value="QUEUINE TRNA-RIBOSYLTRANSFERASE"/>
    <property type="match status" value="1"/>
</dbReference>
<dbReference type="Pfam" id="PF01702">
    <property type="entry name" value="TGT"/>
    <property type="match status" value="1"/>
</dbReference>
<dbReference type="SUPFAM" id="SSF51713">
    <property type="entry name" value="tRNA-guanine transglycosylase"/>
    <property type="match status" value="1"/>
</dbReference>
<name>TGT_CAMLR</name>
<keyword id="KW-0328">Glycosyltransferase</keyword>
<keyword id="KW-0479">Metal-binding</keyword>
<keyword id="KW-0671">Queuosine biosynthesis</keyword>
<keyword id="KW-1185">Reference proteome</keyword>
<keyword id="KW-0808">Transferase</keyword>
<keyword id="KW-0819">tRNA processing</keyword>
<keyword id="KW-0862">Zinc</keyword>
<accession>B9KFT3</accession>
<organism>
    <name type="scientific">Campylobacter lari (strain RM2100 / D67 / ATCC BAA-1060)</name>
    <dbReference type="NCBI Taxonomy" id="306263"/>
    <lineage>
        <taxon>Bacteria</taxon>
        <taxon>Pseudomonadati</taxon>
        <taxon>Campylobacterota</taxon>
        <taxon>Epsilonproteobacteria</taxon>
        <taxon>Campylobacterales</taxon>
        <taxon>Campylobacteraceae</taxon>
        <taxon>Campylobacter</taxon>
    </lineage>
</organism>
<proteinExistence type="inferred from homology"/>
<feature type="chain" id="PRO_1000197990" description="Queuine tRNA-ribosyltransferase">
    <location>
        <begin position="1"/>
        <end position="373"/>
    </location>
</feature>
<feature type="region of interest" description="RNA binding" evidence="1">
    <location>
        <begin position="251"/>
        <end position="257"/>
    </location>
</feature>
<feature type="region of interest" description="RNA binding; important for wobble base 34 recognition" evidence="1">
    <location>
        <begin position="275"/>
        <end position="279"/>
    </location>
</feature>
<feature type="active site" description="Proton acceptor" evidence="1">
    <location>
        <position position="90"/>
    </location>
</feature>
<feature type="active site" description="Nucleophile" evidence="1">
    <location>
        <position position="270"/>
    </location>
</feature>
<feature type="binding site" evidence="1">
    <location>
        <begin position="90"/>
        <end position="94"/>
    </location>
    <ligand>
        <name>substrate</name>
    </ligand>
</feature>
<feature type="binding site" evidence="1">
    <location>
        <position position="144"/>
    </location>
    <ligand>
        <name>substrate</name>
    </ligand>
</feature>
<feature type="binding site" evidence="1">
    <location>
        <position position="193"/>
    </location>
    <ligand>
        <name>substrate</name>
    </ligand>
</feature>
<feature type="binding site" evidence="1">
    <location>
        <position position="220"/>
    </location>
    <ligand>
        <name>substrate</name>
    </ligand>
</feature>
<feature type="binding site" evidence="1">
    <location>
        <position position="308"/>
    </location>
    <ligand>
        <name>Zn(2+)</name>
        <dbReference type="ChEBI" id="CHEBI:29105"/>
    </ligand>
</feature>
<feature type="binding site" evidence="1">
    <location>
        <position position="310"/>
    </location>
    <ligand>
        <name>Zn(2+)</name>
        <dbReference type="ChEBI" id="CHEBI:29105"/>
    </ligand>
</feature>
<feature type="binding site" evidence="1">
    <location>
        <position position="313"/>
    </location>
    <ligand>
        <name>Zn(2+)</name>
        <dbReference type="ChEBI" id="CHEBI:29105"/>
    </ligand>
</feature>
<feature type="binding site" evidence="1">
    <location>
        <position position="339"/>
    </location>
    <ligand>
        <name>Zn(2+)</name>
        <dbReference type="ChEBI" id="CHEBI:29105"/>
    </ligand>
</feature>
<comment type="function">
    <text evidence="1">Catalyzes the base-exchange of a guanine (G) residue with the queuine precursor 7-aminomethyl-7-deazaguanine (PreQ1) at position 34 (anticodon wobble position) in tRNAs with GU(N) anticodons (tRNA-Asp, -Asn, -His and -Tyr). Catalysis occurs through a double-displacement mechanism. The nucleophile active site attacks the C1' of nucleotide 34 to detach the guanine base from the RNA, forming a covalent enzyme-RNA intermediate. The proton acceptor active site deprotonates the incoming PreQ1, allowing a nucleophilic attack on the C1' of the ribose to form the product. After dissociation, two additional enzymatic reactions on the tRNA convert PreQ1 to queuine (Q), resulting in the hypermodified nucleoside queuosine (7-(((4,5-cis-dihydroxy-2-cyclopenten-1-yl)amino)methyl)-7-deazaguanosine).</text>
</comment>
<comment type="catalytic activity">
    <reaction evidence="1">
        <text>7-aminomethyl-7-carbaguanine + guanosine(34) in tRNA = 7-aminomethyl-7-carbaguanosine(34) in tRNA + guanine</text>
        <dbReference type="Rhea" id="RHEA:24104"/>
        <dbReference type="Rhea" id="RHEA-COMP:10341"/>
        <dbReference type="Rhea" id="RHEA-COMP:10342"/>
        <dbReference type="ChEBI" id="CHEBI:16235"/>
        <dbReference type="ChEBI" id="CHEBI:58703"/>
        <dbReference type="ChEBI" id="CHEBI:74269"/>
        <dbReference type="ChEBI" id="CHEBI:82833"/>
        <dbReference type="EC" id="2.4.2.29"/>
    </reaction>
</comment>
<comment type="cofactor">
    <cofactor evidence="1">
        <name>Zn(2+)</name>
        <dbReference type="ChEBI" id="CHEBI:29105"/>
    </cofactor>
    <text evidence="1">Binds 1 zinc ion per subunit.</text>
</comment>
<comment type="pathway">
    <text evidence="1">tRNA modification; tRNA-queuosine biosynthesis.</text>
</comment>
<comment type="subunit">
    <text evidence="1">Homodimer. Within each dimer, one monomer is responsible for RNA recognition and catalysis, while the other monomer binds to the replacement base PreQ1.</text>
</comment>
<comment type="similarity">
    <text evidence="1">Belongs to the queuine tRNA-ribosyltransferase family.</text>
</comment>
<gene>
    <name evidence="1" type="primary">tgt</name>
    <name type="ordered locus">Cla_0584</name>
</gene>
<sequence length="373" mass="42402">MEFKVEYKSANARACRIKTTHSEILTPAFMPVGTLAAIKSLDAIDMSEILDAKIILANTYHLYLRPSSKVIKQMGGLHGFSKFDRSFLTDSGGFQAFSLNKISKPDEEGIKFKSHIDGSLHYFTPKSVLDAQYDFNSDIMMILDDLVALPASKERIELSLKRTIKWAKEAIDYHKLKQNQGVGMGQNIFGIIQGGTDFEARRICSQALCEMDFDGLAIGGLSVGEENEVMYDTVEAMMPYVDNNRPRYLMGVGTPEDLVENVARGVDMFDCVMPTRNARNGTLFTSFGKFNIKKAEFITDHSPIDSKCSCYTCKNFSRAYLNHLFKAKELTFFRLASLHNLHYYLNLAKQMREAIIKNEFENFKKEFYRQRTC</sequence>